<keyword id="KW-0119">Carbohydrate metabolism</keyword>
<keyword id="KW-0963">Cytoplasm</keyword>
<keyword id="KW-0378">Hydrolase</keyword>
<keyword id="KW-0460">Magnesium</keyword>
<keyword id="KW-0479">Metal-binding</keyword>
<keyword id="KW-1185">Reference proteome</keyword>
<name>F16PA_SHEFN</name>
<gene>
    <name evidence="1" type="primary">fbp</name>
    <name type="ordered locus">Sfri_0531</name>
</gene>
<comment type="catalytic activity">
    <reaction evidence="1">
        <text>beta-D-fructose 1,6-bisphosphate + H2O = beta-D-fructose 6-phosphate + phosphate</text>
        <dbReference type="Rhea" id="RHEA:11064"/>
        <dbReference type="ChEBI" id="CHEBI:15377"/>
        <dbReference type="ChEBI" id="CHEBI:32966"/>
        <dbReference type="ChEBI" id="CHEBI:43474"/>
        <dbReference type="ChEBI" id="CHEBI:57634"/>
        <dbReference type="EC" id="3.1.3.11"/>
    </reaction>
</comment>
<comment type="cofactor">
    <cofactor evidence="1">
        <name>Mg(2+)</name>
        <dbReference type="ChEBI" id="CHEBI:18420"/>
    </cofactor>
    <text evidence="1">Binds 2 magnesium ions per subunit.</text>
</comment>
<comment type="pathway">
    <text evidence="1">Carbohydrate biosynthesis; gluconeogenesis.</text>
</comment>
<comment type="subunit">
    <text evidence="1">Homotetramer.</text>
</comment>
<comment type="subcellular location">
    <subcellularLocation>
        <location evidence="1">Cytoplasm</location>
    </subcellularLocation>
</comment>
<comment type="similarity">
    <text evidence="1">Belongs to the FBPase class 1 family.</text>
</comment>
<organism>
    <name type="scientific">Shewanella frigidimarina (strain NCIMB 400)</name>
    <dbReference type="NCBI Taxonomy" id="318167"/>
    <lineage>
        <taxon>Bacteria</taxon>
        <taxon>Pseudomonadati</taxon>
        <taxon>Pseudomonadota</taxon>
        <taxon>Gammaproteobacteria</taxon>
        <taxon>Alteromonadales</taxon>
        <taxon>Shewanellaceae</taxon>
        <taxon>Shewanella</taxon>
    </lineage>
</organism>
<feature type="chain" id="PRO_0000364704" description="Fructose-1,6-bisphosphatase class 1">
    <location>
        <begin position="1"/>
        <end position="330"/>
    </location>
</feature>
<feature type="binding site" evidence="1">
    <location>
        <position position="84"/>
    </location>
    <ligand>
        <name>Mg(2+)</name>
        <dbReference type="ChEBI" id="CHEBI:18420"/>
        <label>1</label>
    </ligand>
</feature>
<feature type="binding site" evidence="1">
    <location>
        <position position="103"/>
    </location>
    <ligand>
        <name>Mg(2+)</name>
        <dbReference type="ChEBI" id="CHEBI:18420"/>
        <label>1</label>
    </ligand>
</feature>
<feature type="binding site" evidence="1">
    <location>
        <position position="103"/>
    </location>
    <ligand>
        <name>Mg(2+)</name>
        <dbReference type="ChEBI" id="CHEBI:18420"/>
        <label>2</label>
    </ligand>
</feature>
<feature type="binding site" evidence="1">
    <location>
        <position position="105"/>
    </location>
    <ligand>
        <name>Mg(2+)</name>
        <dbReference type="ChEBI" id="CHEBI:18420"/>
        <label>1</label>
    </ligand>
</feature>
<feature type="binding site" evidence="1">
    <location>
        <begin position="106"/>
        <end position="109"/>
    </location>
    <ligand>
        <name>substrate</name>
    </ligand>
</feature>
<feature type="binding site" evidence="1">
    <location>
        <position position="106"/>
    </location>
    <ligand>
        <name>Mg(2+)</name>
        <dbReference type="ChEBI" id="CHEBI:18420"/>
        <label>2</label>
    </ligand>
</feature>
<feature type="binding site" evidence="1">
    <location>
        <position position="196"/>
    </location>
    <ligand>
        <name>substrate</name>
    </ligand>
</feature>
<feature type="binding site" evidence="1">
    <location>
        <position position="262"/>
    </location>
    <ligand>
        <name>substrate</name>
    </ligand>
</feature>
<feature type="binding site" evidence="1">
    <location>
        <position position="268"/>
    </location>
    <ligand>
        <name>Mg(2+)</name>
        <dbReference type="ChEBI" id="CHEBI:18420"/>
        <label>2</label>
    </ligand>
</feature>
<reference key="1">
    <citation type="submission" date="2006-08" db="EMBL/GenBank/DDBJ databases">
        <title>Complete sequence of Shewanella frigidimarina NCIMB 400.</title>
        <authorList>
            <consortium name="US DOE Joint Genome Institute"/>
            <person name="Copeland A."/>
            <person name="Lucas S."/>
            <person name="Lapidus A."/>
            <person name="Barry K."/>
            <person name="Detter J.C."/>
            <person name="Glavina del Rio T."/>
            <person name="Hammon N."/>
            <person name="Israni S."/>
            <person name="Dalin E."/>
            <person name="Tice H."/>
            <person name="Pitluck S."/>
            <person name="Fredrickson J.K."/>
            <person name="Kolker E."/>
            <person name="McCuel L.A."/>
            <person name="DiChristina T."/>
            <person name="Nealson K.H."/>
            <person name="Newman D."/>
            <person name="Tiedje J.M."/>
            <person name="Zhou J."/>
            <person name="Romine M.F."/>
            <person name="Culley D.E."/>
            <person name="Serres M."/>
            <person name="Chertkov O."/>
            <person name="Brettin T."/>
            <person name="Bruce D."/>
            <person name="Han C."/>
            <person name="Tapia R."/>
            <person name="Gilna P."/>
            <person name="Schmutz J."/>
            <person name="Larimer F."/>
            <person name="Land M."/>
            <person name="Hauser L."/>
            <person name="Kyrpides N."/>
            <person name="Mikhailova N."/>
            <person name="Richardson P."/>
        </authorList>
    </citation>
    <scope>NUCLEOTIDE SEQUENCE [LARGE SCALE GENOMIC DNA]</scope>
    <source>
        <strain>NCIMB 400</strain>
    </source>
</reference>
<dbReference type="EC" id="3.1.3.11" evidence="1"/>
<dbReference type="EMBL" id="CP000447">
    <property type="protein sequence ID" value="ABI70392.1"/>
    <property type="molecule type" value="Genomic_DNA"/>
</dbReference>
<dbReference type="RefSeq" id="WP_011636019.1">
    <property type="nucleotide sequence ID" value="NC_008345.1"/>
</dbReference>
<dbReference type="SMR" id="Q088C3"/>
<dbReference type="STRING" id="318167.Sfri_0531"/>
<dbReference type="KEGG" id="sfr:Sfri_0531"/>
<dbReference type="eggNOG" id="COG0158">
    <property type="taxonomic scope" value="Bacteria"/>
</dbReference>
<dbReference type="HOGENOM" id="CLU_039977_0_0_6"/>
<dbReference type="OrthoDB" id="9806756at2"/>
<dbReference type="UniPathway" id="UPA00138"/>
<dbReference type="Proteomes" id="UP000000684">
    <property type="component" value="Chromosome"/>
</dbReference>
<dbReference type="GO" id="GO:0005829">
    <property type="term" value="C:cytosol"/>
    <property type="evidence" value="ECO:0007669"/>
    <property type="project" value="TreeGrafter"/>
</dbReference>
<dbReference type="GO" id="GO:0042132">
    <property type="term" value="F:fructose 1,6-bisphosphate 1-phosphatase activity"/>
    <property type="evidence" value="ECO:0007669"/>
    <property type="project" value="UniProtKB-UniRule"/>
</dbReference>
<dbReference type="GO" id="GO:0000287">
    <property type="term" value="F:magnesium ion binding"/>
    <property type="evidence" value="ECO:0007669"/>
    <property type="project" value="UniProtKB-UniRule"/>
</dbReference>
<dbReference type="GO" id="GO:0030388">
    <property type="term" value="P:fructose 1,6-bisphosphate metabolic process"/>
    <property type="evidence" value="ECO:0007669"/>
    <property type="project" value="TreeGrafter"/>
</dbReference>
<dbReference type="GO" id="GO:0006002">
    <property type="term" value="P:fructose 6-phosphate metabolic process"/>
    <property type="evidence" value="ECO:0007669"/>
    <property type="project" value="TreeGrafter"/>
</dbReference>
<dbReference type="GO" id="GO:0006000">
    <property type="term" value="P:fructose metabolic process"/>
    <property type="evidence" value="ECO:0007669"/>
    <property type="project" value="TreeGrafter"/>
</dbReference>
<dbReference type="GO" id="GO:0006094">
    <property type="term" value="P:gluconeogenesis"/>
    <property type="evidence" value="ECO:0007669"/>
    <property type="project" value="UniProtKB-UniRule"/>
</dbReference>
<dbReference type="GO" id="GO:0005986">
    <property type="term" value="P:sucrose biosynthetic process"/>
    <property type="evidence" value="ECO:0007669"/>
    <property type="project" value="TreeGrafter"/>
</dbReference>
<dbReference type="CDD" id="cd00354">
    <property type="entry name" value="FBPase"/>
    <property type="match status" value="1"/>
</dbReference>
<dbReference type="FunFam" id="3.40.190.80:FF:000011">
    <property type="entry name" value="Fructose-1,6-bisphosphatase class 1"/>
    <property type="match status" value="1"/>
</dbReference>
<dbReference type="Gene3D" id="3.40.190.80">
    <property type="match status" value="1"/>
</dbReference>
<dbReference type="Gene3D" id="3.30.540.10">
    <property type="entry name" value="Fructose-1,6-Bisphosphatase, subunit A, domain 1"/>
    <property type="match status" value="1"/>
</dbReference>
<dbReference type="HAMAP" id="MF_01855">
    <property type="entry name" value="FBPase_class1"/>
    <property type="match status" value="1"/>
</dbReference>
<dbReference type="InterPro" id="IPR044015">
    <property type="entry name" value="FBPase_C_dom"/>
</dbReference>
<dbReference type="InterPro" id="IPR000146">
    <property type="entry name" value="FBPase_class-1"/>
</dbReference>
<dbReference type="InterPro" id="IPR033391">
    <property type="entry name" value="FBPase_N"/>
</dbReference>
<dbReference type="InterPro" id="IPR028343">
    <property type="entry name" value="FBPtase"/>
</dbReference>
<dbReference type="NCBIfam" id="NF006779">
    <property type="entry name" value="PRK09293.1-3"/>
    <property type="match status" value="1"/>
</dbReference>
<dbReference type="NCBIfam" id="NF006780">
    <property type="entry name" value="PRK09293.1-4"/>
    <property type="match status" value="1"/>
</dbReference>
<dbReference type="PANTHER" id="PTHR11556">
    <property type="entry name" value="FRUCTOSE-1,6-BISPHOSPHATASE-RELATED"/>
    <property type="match status" value="1"/>
</dbReference>
<dbReference type="PANTHER" id="PTHR11556:SF35">
    <property type="entry name" value="SEDOHEPTULOSE-1,7-BISPHOSPHATASE, CHLOROPLASTIC"/>
    <property type="match status" value="1"/>
</dbReference>
<dbReference type="Pfam" id="PF00316">
    <property type="entry name" value="FBPase"/>
    <property type="match status" value="1"/>
</dbReference>
<dbReference type="Pfam" id="PF18913">
    <property type="entry name" value="FBPase_C"/>
    <property type="match status" value="1"/>
</dbReference>
<dbReference type="PIRSF" id="PIRSF500210">
    <property type="entry name" value="FBPtase"/>
    <property type="match status" value="1"/>
</dbReference>
<dbReference type="PIRSF" id="PIRSF000904">
    <property type="entry name" value="FBPtase_SBPase"/>
    <property type="match status" value="1"/>
</dbReference>
<dbReference type="PRINTS" id="PR00115">
    <property type="entry name" value="F16BPHPHTASE"/>
</dbReference>
<dbReference type="SUPFAM" id="SSF56655">
    <property type="entry name" value="Carbohydrate phosphatase"/>
    <property type="match status" value="1"/>
</dbReference>
<accession>Q088C3</accession>
<evidence type="ECO:0000255" key="1">
    <source>
        <dbReference type="HAMAP-Rule" id="MF_01855"/>
    </source>
</evidence>
<proteinExistence type="inferred from homology"/>
<sequence>MQTLAQTLSVQAVNASLTQLLLTLADTSKAISGAVRHGALAGVLGATEQENIQGETQKKLDVITNDMLKDALKADGNVRGLASEEEDYVVEVNAKGEYLVCFDPLDGSSNIDINSLVGTIFSVLPAPAGELNEQSFLQAGRKQVAAGYVLYGPSTMMALTTGQGTQFYTLAPDSQEFLLTDDSVQITPDTAEFAINMSNQRFWEAPMQTYIADLLLGEIGPREQSFNMRWIAAMVGDVHRVLCRGGIFSYPTDNKNPAKPFKLRLMYEANPMALLVEQAGGKASTGYETILDIQPTEIHQRVAVILGSANEVDTCLSYHGIDYSEEPSID</sequence>
<protein>
    <recommendedName>
        <fullName evidence="1">Fructose-1,6-bisphosphatase class 1</fullName>
        <shortName evidence="1">FBPase class 1</shortName>
        <ecNumber evidence="1">3.1.3.11</ecNumber>
    </recommendedName>
    <alternativeName>
        <fullName evidence="1">D-fructose-1,6-bisphosphate 1-phosphohydrolase class 1</fullName>
    </alternativeName>
</protein>